<name>LPXA_YERPN</name>
<comment type="function">
    <text evidence="1">Involved in the biosynthesis of lipid A, a phosphorylated glycolipid that anchors the lipopolysaccharide to the outer membrane of the cell.</text>
</comment>
<comment type="catalytic activity">
    <reaction evidence="1">
        <text>a (3R)-hydroxyacyl-[ACP] + UDP-N-acetyl-alpha-D-glucosamine = a UDP-3-O-[(3R)-3-hydroxyacyl]-N-acetyl-alpha-D-glucosamine + holo-[ACP]</text>
        <dbReference type="Rhea" id="RHEA:67812"/>
        <dbReference type="Rhea" id="RHEA-COMP:9685"/>
        <dbReference type="Rhea" id="RHEA-COMP:9945"/>
        <dbReference type="ChEBI" id="CHEBI:57705"/>
        <dbReference type="ChEBI" id="CHEBI:64479"/>
        <dbReference type="ChEBI" id="CHEBI:78827"/>
        <dbReference type="ChEBI" id="CHEBI:173225"/>
        <dbReference type="EC" id="2.3.1.129"/>
    </reaction>
</comment>
<comment type="pathway">
    <text evidence="1">Glycolipid biosynthesis; lipid IV(A) biosynthesis; lipid IV(A) from (3R)-3-hydroxytetradecanoyl-[acyl-carrier-protein] and UDP-N-acetyl-alpha-D-glucosamine: step 1/6.</text>
</comment>
<comment type="subunit">
    <text evidence="1">Homotrimer.</text>
</comment>
<comment type="subcellular location">
    <subcellularLocation>
        <location evidence="1">Cytoplasm</location>
    </subcellularLocation>
</comment>
<comment type="similarity">
    <text evidence="1">Belongs to the transferase hexapeptide repeat family. LpxA subfamily.</text>
</comment>
<evidence type="ECO:0000255" key="1">
    <source>
        <dbReference type="HAMAP-Rule" id="MF_00387"/>
    </source>
</evidence>
<accession>Q1CFF9</accession>
<accession>C4GWX0</accession>
<proteinExistence type="inferred from homology"/>
<gene>
    <name evidence="1" type="primary">lpxA</name>
    <name type="ordered locus">YPN_2944</name>
    <name type="ORF">YP516_3334</name>
</gene>
<reference key="1">
    <citation type="journal article" date="2006" name="J. Bacteriol.">
        <title>Complete genome sequence of Yersinia pestis strains Antiqua and Nepal516: evidence of gene reduction in an emerging pathogen.</title>
        <authorList>
            <person name="Chain P.S.G."/>
            <person name="Hu P."/>
            <person name="Malfatti S.A."/>
            <person name="Radnedge L."/>
            <person name="Larimer F."/>
            <person name="Vergez L.M."/>
            <person name="Worsham P."/>
            <person name="Chu M.C."/>
            <person name="Andersen G.L."/>
        </authorList>
    </citation>
    <scope>NUCLEOTIDE SEQUENCE [LARGE SCALE GENOMIC DNA]</scope>
    <source>
        <strain>Nepal516</strain>
    </source>
</reference>
<reference key="2">
    <citation type="submission" date="2009-04" db="EMBL/GenBank/DDBJ databases">
        <title>Yersinia pestis Nepal516A whole genome shotgun sequencing project.</title>
        <authorList>
            <person name="Plunkett G. III"/>
            <person name="Anderson B.D."/>
            <person name="Baumler D.J."/>
            <person name="Burland V."/>
            <person name="Cabot E.L."/>
            <person name="Glasner J.D."/>
            <person name="Mau B."/>
            <person name="Neeno-Eckwall E."/>
            <person name="Perna N.T."/>
            <person name="Munk A.C."/>
            <person name="Tapia R."/>
            <person name="Green L.D."/>
            <person name="Rogers Y.C."/>
            <person name="Detter J.C."/>
            <person name="Bruce D.C."/>
            <person name="Brettin T.S."/>
        </authorList>
    </citation>
    <scope>NUCLEOTIDE SEQUENCE [LARGE SCALE GENOMIC DNA]</scope>
    <source>
        <strain>Nepal516</strain>
    </source>
</reference>
<dbReference type="EC" id="2.3.1.129" evidence="1"/>
<dbReference type="EMBL" id="CP000305">
    <property type="protein sequence ID" value="ABG19271.1"/>
    <property type="molecule type" value="Genomic_DNA"/>
</dbReference>
<dbReference type="EMBL" id="ACNQ01000017">
    <property type="protein sequence ID" value="EEO75420.1"/>
    <property type="molecule type" value="Genomic_DNA"/>
</dbReference>
<dbReference type="RefSeq" id="WP_002212143.1">
    <property type="nucleotide sequence ID" value="NZ_ACNQ01000017.1"/>
</dbReference>
<dbReference type="SMR" id="Q1CFF9"/>
<dbReference type="GeneID" id="57977505"/>
<dbReference type="KEGG" id="ypn:YPN_2944"/>
<dbReference type="HOGENOM" id="CLU_061249_0_0_6"/>
<dbReference type="UniPathway" id="UPA00359">
    <property type="reaction ID" value="UER00477"/>
</dbReference>
<dbReference type="Proteomes" id="UP000008936">
    <property type="component" value="Chromosome"/>
</dbReference>
<dbReference type="GO" id="GO:0005737">
    <property type="term" value="C:cytoplasm"/>
    <property type="evidence" value="ECO:0007669"/>
    <property type="project" value="UniProtKB-SubCell"/>
</dbReference>
<dbReference type="GO" id="GO:0016020">
    <property type="term" value="C:membrane"/>
    <property type="evidence" value="ECO:0007669"/>
    <property type="project" value="GOC"/>
</dbReference>
<dbReference type="GO" id="GO:0008780">
    <property type="term" value="F:acyl-[acyl-carrier-protein]-UDP-N-acetylglucosamine O-acyltransferase activity"/>
    <property type="evidence" value="ECO:0007669"/>
    <property type="project" value="UniProtKB-UniRule"/>
</dbReference>
<dbReference type="GO" id="GO:0009245">
    <property type="term" value="P:lipid A biosynthetic process"/>
    <property type="evidence" value="ECO:0007669"/>
    <property type="project" value="UniProtKB-UniRule"/>
</dbReference>
<dbReference type="CDD" id="cd03351">
    <property type="entry name" value="LbH_UDP-GlcNAc_AT"/>
    <property type="match status" value="1"/>
</dbReference>
<dbReference type="FunFam" id="1.20.1180.10:FF:000001">
    <property type="entry name" value="Acyl-[acyl-carrier-protein]--UDP-N-acetylglucosamine O-acyltransferase"/>
    <property type="match status" value="1"/>
</dbReference>
<dbReference type="FunFam" id="2.160.10.10:FF:000003">
    <property type="entry name" value="Acyl-[acyl-carrier-protein]--UDP-N-acetylglucosamine O-acyltransferase"/>
    <property type="match status" value="1"/>
</dbReference>
<dbReference type="Gene3D" id="2.160.10.10">
    <property type="entry name" value="Hexapeptide repeat proteins"/>
    <property type="match status" value="1"/>
</dbReference>
<dbReference type="Gene3D" id="1.20.1180.10">
    <property type="entry name" value="Udp N-acetylglucosamine O-acyltransferase, C-terminal domain"/>
    <property type="match status" value="1"/>
</dbReference>
<dbReference type="HAMAP" id="MF_00387">
    <property type="entry name" value="LpxA"/>
    <property type="match status" value="1"/>
</dbReference>
<dbReference type="InterPro" id="IPR029098">
    <property type="entry name" value="Acetyltransf_C"/>
</dbReference>
<dbReference type="InterPro" id="IPR037157">
    <property type="entry name" value="Acetyltransf_C_sf"/>
</dbReference>
<dbReference type="InterPro" id="IPR001451">
    <property type="entry name" value="Hexapep"/>
</dbReference>
<dbReference type="InterPro" id="IPR018357">
    <property type="entry name" value="Hexapep_transf_CS"/>
</dbReference>
<dbReference type="InterPro" id="IPR010137">
    <property type="entry name" value="Lipid_A_LpxA"/>
</dbReference>
<dbReference type="InterPro" id="IPR011004">
    <property type="entry name" value="Trimer_LpxA-like_sf"/>
</dbReference>
<dbReference type="NCBIfam" id="TIGR01852">
    <property type="entry name" value="lipid_A_lpxA"/>
    <property type="match status" value="1"/>
</dbReference>
<dbReference type="NCBIfam" id="NF003657">
    <property type="entry name" value="PRK05289.1"/>
    <property type="match status" value="1"/>
</dbReference>
<dbReference type="PANTHER" id="PTHR43480">
    <property type="entry name" value="ACYL-[ACYL-CARRIER-PROTEIN]--UDP-N-ACETYLGLUCOSAMINE O-ACYLTRANSFERASE"/>
    <property type="match status" value="1"/>
</dbReference>
<dbReference type="PANTHER" id="PTHR43480:SF1">
    <property type="entry name" value="ACYL-[ACYL-CARRIER-PROTEIN]--UDP-N-ACETYLGLUCOSAMINE O-ACYLTRANSFERASE, MITOCHONDRIAL-RELATED"/>
    <property type="match status" value="1"/>
</dbReference>
<dbReference type="Pfam" id="PF13720">
    <property type="entry name" value="Acetyltransf_11"/>
    <property type="match status" value="1"/>
</dbReference>
<dbReference type="Pfam" id="PF00132">
    <property type="entry name" value="Hexapep"/>
    <property type="match status" value="2"/>
</dbReference>
<dbReference type="PIRSF" id="PIRSF000456">
    <property type="entry name" value="UDP-GlcNAc_acltr"/>
    <property type="match status" value="1"/>
</dbReference>
<dbReference type="SUPFAM" id="SSF51161">
    <property type="entry name" value="Trimeric LpxA-like enzymes"/>
    <property type="match status" value="1"/>
</dbReference>
<dbReference type="PROSITE" id="PS00101">
    <property type="entry name" value="HEXAPEP_TRANSFERASES"/>
    <property type="match status" value="2"/>
</dbReference>
<organism>
    <name type="scientific">Yersinia pestis bv. Antiqua (strain Nepal516)</name>
    <dbReference type="NCBI Taxonomy" id="377628"/>
    <lineage>
        <taxon>Bacteria</taxon>
        <taxon>Pseudomonadati</taxon>
        <taxon>Pseudomonadota</taxon>
        <taxon>Gammaproteobacteria</taxon>
        <taxon>Enterobacterales</taxon>
        <taxon>Yersiniaceae</taxon>
        <taxon>Yersinia</taxon>
    </lineage>
</organism>
<sequence>MIDKTAFIHPSSIVEEGAIIGAGVYIGPFCIVGSQVEIGAGTELKSHVVVNGITKIGCDNQIYQFASIGEANQDLKYAGEPTRVEVGDRNRIRESVTIHRGTTQGGGVTKVGCDNLLMVNTHVAHDCVIGNRCILANNAALGGHVEIDDYAIIGGMTAIHQFCVIGAHVMVGGCSGITQDVPPFVIAQGNHATPFGINIEGLKRRGFDKESLHAIRSAYKLLYRSGRTLDEVKPEIAELAEQYPVVKAFNDFFARSTRGIIR</sequence>
<keyword id="KW-0012">Acyltransferase</keyword>
<keyword id="KW-0963">Cytoplasm</keyword>
<keyword id="KW-0441">Lipid A biosynthesis</keyword>
<keyword id="KW-0444">Lipid biosynthesis</keyword>
<keyword id="KW-0443">Lipid metabolism</keyword>
<keyword id="KW-0677">Repeat</keyword>
<keyword id="KW-0808">Transferase</keyword>
<feature type="chain" id="PRO_0000302615" description="Acyl-[acyl-carrier-protein]--UDP-N-acetylglucosamine O-acyltransferase">
    <location>
        <begin position="1"/>
        <end position="262"/>
    </location>
</feature>
<protein>
    <recommendedName>
        <fullName evidence="1">Acyl-[acyl-carrier-protein]--UDP-N-acetylglucosamine O-acyltransferase</fullName>
        <shortName evidence="1">UDP-N-acetylglucosamine acyltransferase</shortName>
        <ecNumber evidence="1">2.3.1.129</ecNumber>
    </recommendedName>
</protein>